<protein>
    <recommendedName>
        <fullName>Trafficking protein particle complex subunit 13</fullName>
    </recommendedName>
</protein>
<sequence length="412" mass="46065">MDVNQPKQEHLLALKVMRLTKPTLFTNIPVTCEERDLPGDLFSTLMKDDPSTVKGAETLMLGEMLTLPQNFGNIFLGETFSSYISVHNDSNQVVKDIQVKADLQTSSQRLNLSASTAVVSELKPDSCIDDVIHHEVKEIGTHILVCAVSYTTQTGEKMYFRKFFKFQVLKPLDVKTKFYNAETDEVFLEAQIQNITTSPMFMEKVSLEPSIMYNVSELNTVITNGDGCSTFGTKTYLQPLDTRQYLYCLKPKPEFAEKAGVIKGVTVIGKLDIVWKTNLGERGRLQTSQLQRMAPGYGDVRLSIETIPDTVRLEEPFDITCKITNCSSERTMDLVLEMCNTNAIHWCGVSGRQLGKLHPSSSLHLTLALLSSVQGLQSVSGLRLTDTFLKRTYEYDDIAQVCVVSSKLQAES</sequence>
<name>TPC13_XENTR</name>
<reference key="1">
    <citation type="submission" date="2006-07" db="EMBL/GenBank/DDBJ databases">
        <authorList>
            <consortium name="NIH - Xenopus Gene Collection (XGC) project"/>
        </authorList>
    </citation>
    <scope>NUCLEOTIDE SEQUENCE [LARGE SCALE MRNA]</scope>
    <source>
        <tissue>Brain</tissue>
    </source>
</reference>
<feature type="chain" id="PRO_0000321553" description="Trafficking protein particle complex subunit 13">
    <location>
        <begin position="1"/>
        <end position="412"/>
    </location>
</feature>
<dbReference type="EMBL" id="BC118702">
    <property type="protein sequence ID" value="AAI18703.1"/>
    <property type="molecule type" value="mRNA"/>
</dbReference>
<dbReference type="RefSeq" id="NP_001231833.1">
    <property type="nucleotide sequence ID" value="NM_001244904.1"/>
</dbReference>
<dbReference type="FunCoup" id="Q0VFT9">
    <property type="interactions" value="2087"/>
</dbReference>
<dbReference type="STRING" id="8364.ENSXETP00000043253"/>
<dbReference type="PaxDb" id="8364-ENSXETP00000025092"/>
<dbReference type="GeneID" id="549181"/>
<dbReference type="KEGG" id="xtr:549181"/>
<dbReference type="AGR" id="Xenbase:XB-GENE-5802753"/>
<dbReference type="CTD" id="80006"/>
<dbReference type="Xenbase" id="XB-GENE-5802753">
    <property type="gene designation" value="trappc13"/>
</dbReference>
<dbReference type="eggNOG" id="KOG2625">
    <property type="taxonomic scope" value="Eukaryota"/>
</dbReference>
<dbReference type="HOGENOM" id="CLU_027041_0_0_1"/>
<dbReference type="InParanoid" id="Q0VFT9"/>
<dbReference type="OrthoDB" id="10250284at2759"/>
<dbReference type="Proteomes" id="UP000008143">
    <property type="component" value="Chromosome 1"/>
</dbReference>
<dbReference type="Bgee" id="ENSXETG00000000453">
    <property type="expression patterns" value="Expressed in egg cell and 12 other cell types or tissues"/>
</dbReference>
<dbReference type="InterPro" id="IPR010378">
    <property type="entry name" value="TRAPPC13"/>
</dbReference>
<dbReference type="InterPro" id="IPR055428">
    <property type="entry name" value="TRAPPC13_C"/>
</dbReference>
<dbReference type="InterPro" id="IPR055429">
    <property type="entry name" value="TRAPPC13_M"/>
</dbReference>
<dbReference type="InterPro" id="IPR055427">
    <property type="entry name" value="TRAPPC13_N"/>
</dbReference>
<dbReference type="PANTHER" id="PTHR13134">
    <property type="entry name" value="TRAFFICKING PROTEIN PARTICLE COMPLEX SUBUNIT 13"/>
    <property type="match status" value="1"/>
</dbReference>
<dbReference type="PANTHER" id="PTHR13134:SF3">
    <property type="entry name" value="TRAFFICKING PROTEIN PARTICLE COMPLEX SUBUNIT 13"/>
    <property type="match status" value="1"/>
</dbReference>
<dbReference type="Pfam" id="PF23643">
    <property type="entry name" value="TRAPPC13_C"/>
    <property type="match status" value="1"/>
</dbReference>
<dbReference type="Pfam" id="PF23647">
    <property type="entry name" value="TRAPPC13_M"/>
    <property type="match status" value="1"/>
</dbReference>
<dbReference type="Pfam" id="PF06159">
    <property type="entry name" value="TRAPPC13_N"/>
    <property type="match status" value="1"/>
</dbReference>
<keyword id="KW-1185">Reference proteome</keyword>
<organism>
    <name type="scientific">Xenopus tropicalis</name>
    <name type="common">Western clawed frog</name>
    <name type="synonym">Silurana tropicalis</name>
    <dbReference type="NCBI Taxonomy" id="8364"/>
    <lineage>
        <taxon>Eukaryota</taxon>
        <taxon>Metazoa</taxon>
        <taxon>Chordata</taxon>
        <taxon>Craniata</taxon>
        <taxon>Vertebrata</taxon>
        <taxon>Euteleostomi</taxon>
        <taxon>Amphibia</taxon>
        <taxon>Batrachia</taxon>
        <taxon>Anura</taxon>
        <taxon>Pipoidea</taxon>
        <taxon>Pipidae</taxon>
        <taxon>Xenopodinae</taxon>
        <taxon>Xenopus</taxon>
        <taxon>Silurana</taxon>
    </lineage>
</organism>
<accession>Q0VFT9</accession>
<comment type="subunit">
    <text evidence="1">Part of the multisubunit TRAPP (transport protein particle) complex.</text>
</comment>
<comment type="similarity">
    <text evidence="2">Belongs to the TRAPPC13 family.</text>
</comment>
<gene>
    <name type="primary">trappc13</name>
</gene>
<evidence type="ECO:0000250" key="1"/>
<evidence type="ECO:0000305" key="2"/>
<proteinExistence type="evidence at transcript level"/>